<accession>O43861</accession>
<accession>O60872</accession>
<accession>Q08AD8</accession>
<accession>Q08AD9</accession>
<feature type="chain" id="PRO_0000046377" description="Probable phospholipid-transporting ATPase IIB">
    <location>
        <begin position="1"/>
        <end position="1147"/>
    </location>
</feature>
<feature type="topological domain" description="Cytoplasmic" evidence="6">
    <location>
        <begin position="1"/>
        <end position="146"/>
    </location>
</feature>
<feature type="transmembrane region" description="Helical" evidence="6">
    <location>
        <begin position="147"/>
        <end position="168"/>
    </location>
</feature>
<feature type="topological domain" description="Extracellular" evidence="6">
    <location>
        <begin position="169"/>
        <end position="173"/>
    </location>
</feature>
<feature type="transmembrane region" description="Helical" evidence="6">
    <location>
        <begin position="174"/>
        <end position="196"/>
    </location>
</feature>
<feature type="topological domain" description="Cytoplasmic" evidence="6">
    <location>
        <begin position="197"/>
        <end position="380"/>
    </location>
</feature>
<feature type="transmembrane region" description="Helical" evidence="6">
    <location>
        <begin position="381"/>
        <end position="401"/>
    </location>
</feature>
<feature type="topological domain" description="Extracellular" evidence="6">
    <location>
        <begin position="402"/>
        <end position="409"/>
    </location>
</feature>
<feature type="transmembrane region" description="Helical" evidence="6">
    <location>
        <begin position="410"/>
        <end position="431"/>
    </location>
</feature>
<feature type="topological domain" description="Cytoplasmic" evidence="6">
    <location>
        <begin position="432"/>
        <end position="930"/>
    </location>
</feature>
<feature type="transmembrane region" description="Helical" evidence="6">
    <location>
        <begin position="931"/>
        <end position="951"/>
    </location>
</feature>
<feature type="topological domain" description="Extracellular" evidence="6">
    <location>
        <begin position="952"/>
        <end position="963"/>
    </location>
</feature>
<feature type="transmembrane region" description="Helical" evidence="6">
    <location>
        <begin position="964"/>
        <end position="982"/>
    </location>
</feature>
<feature type="topological domain" description="Cytoplasmic" evidence="6">
    <location>
        <begin position="983"/>
        <end position="1012"/>
    </location>
</feature>
<feature type="transmembrane region" description="Helical" evidence="6">
    <location>
        <begin position="1013"/>
        <end position="1031"/>
    </location>
</feature>
<feature type="topological domain" description="Extracellular" evidence="6">
    <location>
        <begin position="1032"/>
        <end position="1038"/>
    </location>
</feature>
<feature type="transmembrane region" description="Helical" evidence="6">
    <location>
        <begin position="1039"/>
        <end position="1061"/>
    </location>
</feature>
<feature type="topological domain" description="Cytoplasmic" evidence="6">
    <location>
        <begin position="1062"/>
        <end position="1067"/>
    </location>
</feature>
<feature type="transmembrane region" description="Helical" evidence="6">
    <location>
        <begin position="1068"/>
        <end position="1088"/>
    </location>
</feature>
<feature type="topological domain" description="Extracellular" evidence="6">
    <location>
        <begin position="1089"/>
        <end position="1105"/>
    </location>
</feature>
<feature type="transmembrane region" description="Helical" evidence="6">
    <location>
        <begin position="1106"/>
        <end position="1130"/>
    </location>
</feature>
<feature type="topological domain" description="Cytoplasmic" evidence="6">
    <location>
        <begin position="1131"/>
        <end position="1147"/>
    </location>
</feature>
<feature type="region of interest" description="Disordered" evidence="7">
    <location>
        <begin position="503"/>
        <end position="535"/>
    </location>
</feature>
<feature type="compositionally biased region" description="Polar residues" evidence="7">
    <location>
        <begin position="505"/>
        <end position="530"/>
    </location>
</feature>
<feature type="active site" description="4-aspartylphosphate intermediate" evidence="3">
    <location>
        <position position="468"/>
    </location>
</feature>
<feature type="binding site" evidence="5">
    <location>
        <position position="468"/>
    </location>
    <ligand>
        <name>ATP</name>
        <dbReference type="ChEBI" id="CHEBI:30616"/>
    </ligand>
</feature>
<feature type="binding site" evidence="5">
    <location>
        <position position="468"/>
    </location>
    <ligand>
        <name>Mg(2+)</name>
        <dbReference type="ChEBI" id="CHEBI:18420"/>
    </ligand>
</feature>
<feature type="binding site" evidence="5">
    <location>
        <position position="469"/>
    </location>
    <ligand>
        <name>ATP</name>
        <dbReference type="ChEBI" id="CHEBI:30616"/>
    </ligand>
</feature>
<feature type="binding site" evidence="3">
    <location>
        <position position="470"/>
    </location>
    <ligand>
        <name>ATP</name>
        <dbReference type="ChEBI" id="CHEBI:30616"/>
    </ligand>
</feature>
<feature type="binding site" evidence="5">
    <location>
        <position position="470"/>
    </location>
    <ligand>
        <name>Mg(2+)</name>
        <dbReference type="ChEBI" id="CHEBI:18420"/>
    </ligand>
</feature>
<feature type="binding site" evidence="1">
    <location>
        <position position="591"/>
    </location>
    <ligand>
        <name>ATP</name>
        <dbReference type="ChEBI" id="CHEBI:30616"/>
    </ligand>
</feature>
<feature type="binding site" evidence="5">
    <location>
        <position position="633"/>
    </location>
    <ligand>
        <name>ATP</name>
        <dbReference type="ChEBI" id="CHEBI:30616"/>
    </ligand>
</feature>
<feature type="binding site" evidence="3">
    <location>
        <position position="638"/>
    </location>
    <ligand>
        <name>ATP</name>
        <dbReference type="ChEBI" id="CHEBI:30616"/>
    </ligand>
</feature>
<feature type="binding site" evidence="1">
    <location>
        <position position="657"/>
    </location>
    <ligand>
        <name>ATP</name>
        <dbReference type="ChEBI" id="CHEBI:30616"/>
    </ligand>
</feature>
<feature type="binding site" evidence="1">
    <location>
        <position position="686"/>
    </location>
    <ligand>
        <name>ATP</name>
        <dbReference type="ChEBI" id="CHEBI:30616"/>
    </ligand>
</feature>
<feature type="binding site" evidence="2">
    <location>
        <position position="687"/>
    </location>
    <ligand>
        <name>ATP</name>
        <dbReference type="ChEBI" id="CHEBI:30616"/>
    </ligand>
</feature>
<feature type="binding site" evidence="1">
    <location>
        <position position="766"/>
    </location>
    <ligand>
        <name>ATP</name>
        <dbReference type="ChEBI" id="CHEBI:30616"/>
    </ligand>
</feature>
<feature type="binding site" evidence="1">
    <location>
        <position position="767"/>
    </location>
    <ligand>
        <name>ATP</name>
        <dbReference type="ChEBI" id="CHEBI:30616"/>
    </ligand>
</feature>
<feature type="binding site" evidence="1">
    <location>
        <position position="768"/>
    </location>
    <ligand>
        <name>ATP</name>
        <dbReference type="ChEBI" id="CHEBI:30616"/>
    </ligand>
</feature>
<feature type="binding site" evidence="1">
    <location>
        <position position="848"/>
    </location>
    <ligand>
        <name>ATP</name>
        <dbReference type="ChEBI" id="CHEBI:30616"/>
    </ligand>
</feature>
<feature type="binding site" evidence="1">
    <location>
        <position position="854"/>
    </location>
    <ligand>
        <name>ATP</name>
        <dbReference type="ChEBI" id="CHEBI:30616"/>
    </ligand>
</feature>
<feature type="binding site" evidence="5">
    <location>
        <position position="874"/>
    </location>
    <ligand>
        <name>Mg(2+)</name>
        <dbReference type="ChEBI" id="CHEBI:18420"/>
    </ligand>
</feature>
<feature type="binding site" evidence="5">
    <location>
        <position position="877"/>
    </location>
    <ligand>
        <name>ATP</name>
        <dbReference type="ChEBI" id="CHEBI:30616"/>
    </ligand>
</feature>
<feature type="binding site" evidence="1">
    <location>
        <position position="878"/>
    </location>
    <ligand>
        <name>ATP</name>
        <dbReference type="ChEBI" id="CHEBI:30616"/>
    </ligand>
</feature>
<feature type="binding site" evidence="4">
    <location>
        <position position="878"/>
    </location>
    <ligand>
        <name>Mg(2+)</name>
        <dbReference type="ChEBI" id="CHEBI:18420"/>
    </ligand>
</feature>
<feature type="splice variant" id="VSP_035790" description="In isoform 2." evidence="10">
    <location>
        <begin position="1092"/>
        <end position="1102"/>
    </location>
</feature>
<feature type="sequence variant" id="VAR_047557" description="In dbSNP:rs4078115." evidence="8">
    <original>S</original>
    <variation>G</variation>
    <location>
        <position position="39"/>
    </location>
</feature>
<feature type="sequence variant" id="VAR_061037" description="In dbSNP:rs34938281.">
    <original>R</original>
    <variation>Q</variation>
    <location>
        <position position="108"/>
    </location>
</feature>
<feature type="sequence variant" id="VAR_047558" description="In dbSNP:rs36034863.">
    <original>D</original>
    <variation>N</variation>
    <location>
        <position position="504"/>
    </location>
</feature>
<feature type="sequence variant" id="VAR_047559" description="In dbSNP:rs585033.">
    <original>M</original>
    <variation>L</variation>
    <location>
        <position position="732"/>
    </location>
</feature>
<feature type="sequence conflict" description="In Ref. 4; AAC05243." evidence="11" ref="4">
    <original>D</original>
    <variation>N</variation>
    <location>
        <position position="886"/>
    </location>
</feature>
<feature type="sequence conflict" description="In Ref. 4; AAC05243." evidence="11" ref="4">
    <original>R</original>
    <variation>K</variation>
    <location>
        <position position="1006"/>
    </location>
</feature>
<feature type="sequence conflict" description="In Ref. 4; AAC05243." evidence="11" ref="4">
    <original>S</original>
    <variation>I</variation>
    <location>
        <position position="1020"/>
    </location>
</feature>
<feature type="sequence conflict" description="In Ref. 4; AAC05243." evidence="11" ref="4">
    <original>E</original>
    <variation>D</variation>
    <location>
        <position position="1036"/>
    </location>
</feature>
<feature type="sequence conflict" description="In Ref. 4; AAC05243." evidence="11" ref="4">
    <original>E</original>
    <variation>D</variation>
    <location>
        <position position="1073"/>
    </location>
</feature>
<feature type="sequence conflict" description="In Ref. 4; AAC05243." evidence="11" ref="4">
    <original>R</original>
    <variation>K</variation>
    <location>
        <position position="1095"/>
    </location>
</feature>
<feature type="sequence conflict" description="In Ref. 4; AAC05243." evidence="11" ref="4">
    <original>D</original>
    <variation>N</variation>
    <location>
        <position position="1103"/>
    </location>
</feature>
<feature type="sequence conflict" description="In Ref. 4; AAC05243." evidence="11" ref="4">
    <original>K</original>
    <variation>N</variation>
    <location>
        <position position="1131"/>
    </location>
</feature>
<proteinExistence type="evidence at protein level"/>
<sequence>MADQIPLYPVRSAAAAAANRKRAAYYSAAGPRPGADRHSRYQLEDESAHLDEMPLMMSEEGFENEESDYHTLPRARIMQRKRGLEWFVCDGWKFLCTSCCGWLINICRRKKELKARTVWLGCPEKCEEKHPRNSIKNQKYNVFTFIPGVLYEQFKFFLNLYFLVISCSQFVPALKIGYLYTYWAPLGFVLAVTMTREAIDEFRRFQRDKEVNSQLYSKLTVRGKVQVKSSDIQVGDLIIVEKNQRIPSDMVFLRTSEKAGSCFIRTDQLDGETDWKLKVAVSCTQQLPALGDLFSISAYVYAQKPQMDIHSFEGTFTREDSDPPIHESLSIENTLWASTIVASGTVIGVVIYTGKETRSVMNTSNPKNKVGLLDLELNRLTKALFLALVALSIVMVTLQGFVGPWYRNLFRFLLLFSYIIPISLRVNLDMGKAVYGWMMMKDENIPGTVVRTSTIPEELGRLVYLLTDKTGTLTQNEMIFKRLHLGTVSYGADTMDEIQSHVRDSYSQMQSQAGGNNTGSTPLRKAQSSAPKVRKSVSSRIHEAVKAIVLCHNVTPVYESRAGVTEETEFAEADQDFSDENRTYQASSPDEVALVQWTESVGLTLVSRDLTSMQLKTPSGQVLSFCILQLFPFTSESKRMGVIVRDESTAEITFYMKGADVAMSPIVQYNDWLEEECGNMAREGLRTLVVAKKALTEEQYQDFESRYTQAKLSMHDRSLKVAAVVESLEREMELLCLTGVEDQLQADVRPTLEMLRNAGIKIWMLTGDKLETATCIAKSSHLVSRTQDIHIFRQVTSRGEAHLELNAFRRKHDCALVISGDSLEVCLKYYEHEFVELACQCPAVVCCRCSPTQKARIVTLLQQHTGRRTCAIGDGGNDVSMIQAADCGIGIEGKEGKQASLAADFSITQFRHIGRLLMVHGRNSYKRSAALGQFVMHRGLIISTMQAVFSSVFYFASVPLYQGFLMVGYATIYTMFPVFSLVLDQDVKPEMAMLYPELYKDLTKGRSLSFKTFLIWVLISIYQGGILMYGALVLFESEFVHVVAISFTALILTELLMVALTVRTWHWLMVVAEFLSLGCYVSSLAFLNEYFGIGRVSFGAFLDVAFITTVTFLWKVSAITVVSCLPLYVLKYLRRKLSPPSYCKLAS</sequence>
<protein>
    <recommendedName>
        <fullName>Probable phospholipid-transporting ATPase IIB</fullName>
        <ecNumber>7.6.2.1</ecNumber>
    </recommendedName>
    <alternativeName>
        <fullName>ATPase class II type 9B</fullName>
    </alternativeName>
</protein>
<keyword id="KW-0025">Alternative splicing</keyword>
<keyword id="KW-0067">ATP-binding</keyword>
<keyword id="KW-0333">Golgi apparatus</keyword>
<keyword id="KW-0445">Lipid transport</keyword>
<keyword id="KW-0460">Magnesium</keyword>
<keyword id="KW-0472">Membrane</keyword>
<keyword id="KW-0479">Metal-binding</keyword>
<keyword id="KW-0547">Nucleotide-binding</keyword>
<keyword id="KW-1267">Proteomics identification</keyword>
<keyword id="KW-1185">Reference proteome</keyword>
<keyword id="KW-1278">Translocase</keyword>
<keyword id="KW-0812">Transmembrane</keyword>
<keyword id="KW-1133">Transmembrane helix</keyword>
<keyword id="KW-0813">Transport</keyword>
<name>ATP9B_HUMAN</name>
<dbReference type="EC" id="7.6.2.1"/>
<dbReference type="EMBL" id="AC023090">
    <property type="status" value="NOT_ANNOTATED_CDS"/>
    <property type="molecule type" value="Genomic_DNA"/>
</dbReference>
<dbReference type="EMBL" id="AC099689">
    <property type="status" value="NOT_ANNOTATED_CDS"/>
    <property type="molecule type" value="Genomic_DNA"/>
</dbReference>
<dbReference type="EMBL" id="AC104423">
    <property type="status" value="NOT_ANNOTATED_CDS"/>
    <property type="molecule type" value="Genomic_DNA"/>
</dbReference>
<dbReference type="EMBL" id="AC125437">
    <property type="status" value="NOT_ANNOTATED_CDS"/>
    <property type="molecule type" value="Genomic_DNA"/>
</dbReference>
<dbReference type="EMBL" id="BC125219">
    <property type="protein sequence ID" value="AAI25220.1"/>
    <property type="molecule type" value="mRNA"/>
</dbReference>
<dbReference type="EMBL" id="BC125220">
    <property type="protein sequence ID" value="AAI25221.1"/>
    <property type="molecule type" value="mRNA"/>
</dbReference>
<dbReference type="EMBL" id="AK097757">
    <property type="status" value="NOT_ANNOTATED_CDS"/>
    <property type="molecule type" value="mRNA"/>
</dbReference>
<dbReference type="EMBL" id="U78978">
    <property type="protein sequence ID" value="AAC05243.1"/>
    <property type="molecule type" value="mRNA"/>
</dbReference>
<dbReference type="EMBL" id="AJ006268">
    <property type="protein sequence ID" value="CAA06934.1"/>
    <property type="molecule type" value="mRNA"/>
</dbReference>
<dbReference type="CCDS" id="CCDS12014.1">
    <molecule id="O43861-1"/>
</dbReference>
<dbReference type="CCDS" id="CCDS77202.1">
    <molecule id="O43861-2"/>
</dbReference>
<dbReference type="RefSeq" id="NP_001293014.1">
    <molecule id="O43861-2"/>
    <property type="nucleotide sequence ID" value="NM_001306085.2"/>
</dbReference>
<dbReference type="RefSeq" id="NP_940933.3">
    <molecule id="O43861-1"/>
    <property type="nucleotide sequence ID" value="NM_198531.4"/>
</dbReference>
<dbReference type="SMR" id="O43861"/>
<dbReference type="BioGRID" id="131925">
    <property type="interactions" value="9"/>
</dbReference>
<dbReference type="FunCoup" id="O43861">
    <property type="interactions" value="3025"/>
</dbReference>
<dbReference type="IntAct" id="O43861">
    <property type="interactions" value="3"/>
</dbReference>
<dbReference type="STRING" id="9606.ENSP00000398076"/>
<dbReference type="iPTMnet" id="O43861"/>
<dbReference type="PhosphoSitePlus" id="O43861"/>
<dbReference type="SwissPalm" id="O43861"/>
<dbReference type="BioMuta" id="ATP9B"/>
<dbReference type="jPOST" id="O43861"/>
<dbReference type="MassIVE" id="O43861"/>
<dbReference type="PaxDb" id="9606-ENSP00000398076"/>
<dbReference type="PeptideAtlas" id="O43861"/>
<dbReference type="ProteomicsDB" id="49209">
    <molecule id="O43861-1"/>
</dbReference>
<dbReference type="ProteomicsDB" id="49210">
    <molecule id="O43861-2"/>
</dbReference>
<dbReference type="Antibodypedia" id="23438">
    <property type="antibodies" value="10 antibodies from 7 providers"/>
</dbReference>
<dbReference type="DNASU" id="374868"/>
<dbReference type="Ensembl" id="ENST00000307671.12">
    <molecule id="O43861-2"/>
    <property type="protein sequence ID" value="ENSP00000304500.7"/>
    <property type="gene ID" value="ENSG00000166377.21"/>
</dbReference>
<dbReference type="Ensembl" id="ENST00000426216.6">
    <molecule id="O43861-1"/>
    <property type="protein sequence ID" value="ENSP00000398076.2"/>
    <property type="gene ID" value="ENSG00000166377.21"/>
</dbReference>
<dbReference type="GeneID" id="374868"/>
<dbReference type="KEGG" id="hsa:374868"/>
<dbReference type="MANE-Select" id="ENST00000426216.6">
    <property type="protein sequence ID" value="ENSP00000398076.2"/>
    <property type="RefSeq nucleotide sequence ID" value="NM_198531.5"/>
    <property type="RefSeq protein sequence ID" value="NP_940933.3"/>
</dbReference>
<dbReference type="UCSC" id="uc002lmw.2">
    <molecule id="O43861-1"/>
    <property type="organism name" value="human"/>
</dbReference>
<dbReference type="AGR" id="HGNC:13541"/>
<dbReference type="CTD" id="374868"/>
<dbReference type="DisGeNET" id="374868"/>
<dbReference type="GeneCards" id="ATP9B"/>
<dbReference type="HGNC" id="HGNC:13541">
    <property type="gene designation" value="ATP9B"/>
</dbReference>
<dbReference type="HPA" id="ENSG00000166377">
    <property type="expression patterns" value="Low tissue specificity"/>
</dbReference>
<dbReference type="MIM" id="614446">
    <property type="type" value="gene"/>
</dbReference>
<dbReference type="neXtProt" id="NX_O43861"/>
<dbReference type="OpenTargets" id="ENSG00000166377"/>
<dbReference type="PharmGKB" id="PA25172"/>
<dbReference type="VEuPathDB" id="HostDB:ENSG00000166377"/>
<dbReference type="eggNOG" id="KOG0210">
    <property type="taxonomic scope" value="Eukaryota"/>
</dbReference>
<dbReference type="GeneTree" id="ENSGT00940000157071"/>
<dbReference type="HOGENOM" id="CLU_000846_3_1_1"/>
<dbReference type="InParanoid" id="O43861"/>
<dbReference type="OMA" id="IAITTWH"/>
<dbReference type="OrthoDB" id="377733at2759"/>
<dbReference type="PAN-GO" id="O43861">
    <property type="GO annotations" value="7 GO annotations based on evolutionary models"/>
</dbReference>
<dbReference type="PhylomeDB" id="O43861"/>
<dbReference type="TreeFam" id="TF300590"/>
<dbReference type="PathwayCommons" id="O43861"/>
<dbReference type="Reactome" id="R-HSA-936837">
    <property type="pathway name" value="Ion transport by P-type ATPases"/>
</dbReference>
<dbReference type="BioGRID-ORCS" id="374868">
    <property type="hits" value="13 hits in 1156 CRISPR screens"/>
</dbReference>
<dbReference type="ChiTaRS" id="ATP9B">
    <property type="organism name" value="human"/>
</dbReference>
<dbReference type="GenomeRNAi" id="374868"/>
<dbReference type="Pharos" id="O43861">
    <property type="development level" value="Tdark"/>
</dbReference>
<dbReference type="PRO" id="PR:O43861"/>
<dbReference type="Proteomes" id="UP000005640">
    <property type="component" value="Chromosome 18"/>
</dbReference>
<dbReference type="RNAct" id="O43861">
    <property type="molecule type" value="protein"/>
</dbReference>
<dbReference type="Bgee" id="ENSG00000166377">
    <property type="expression patterns" value="Expressed in sural nerve and 169 other cell types or tissues"/>
</dbReference>
<dbReference type="ExpressionAtlas" id="O43861">
    <property type="expression patterns" value="baseline and differential"/>
</dbReference>
<dbReference type="GO" id="GO:0005768">
    <property type="term" value="C:endosome"/>
    <property type="evidence" value="ECO:0000318"/>
    <property type="project" value="GO_Central"/>
</dbReference>
<dbReference type="GO" id="GO:0048471">
    <property type="term" value="C:perinuclear region of cytoplasm"/>
    <property type="evidence" value="ECO:0000314"/>
    <property type="project" value="UniProtKB"/>
</dbReference>
<dbReference type="GO" id="GO:0005886">
    <property type="term" value="C:plasma membrane"/>
    <property type="evidence" value="ECO:0000318"/>
    <property type="project" value="GO_Central"/>
</dbReference>
<dbReference type="GO" id="GO:0005802">
    <property type="term" value="C:trans-Golgi network"/>
    <property type="evidence" value="ECO:0000314"/>
    <property type="project" value="UniProtKB"/>
</dbReference>
<dbReference type="GO" id="GO:0005524">
    <property type="term" value="F:ATP binding"/>
    <property type="evidence" value="ECO:0007669"/>
    <property type="project" value="UniProtKB-KW"/>
</dbReference>
<dbReference type="GO" id="GO:0016887">
    <property type="term" value="F:ATP hydrolysis activity"/>
    <property type="evidence" value="ECO:0007669"/>
    <property type="project" value="InterPro"/>
</dbReference>
<dbReference type="GO" id="GO:0140326">
    <property type="term" value="F:ATPase-coupled intramembrane lipid transporter activity"/>
    <property type="evidence" value="ECO:0000318"/>
    <property type="project" value="GO_Central"/>
</dbReference>
<dbReference type="GO" id="GO:0000287">
    <property type="term" value="F:magnesium ion binding"/>
    <property type="evidence" value="ECO:0007669"/>
    <property type="project" value="InterPro"/>
</dbReference>
<dbReference type="GO" id="GO:0006897">
    <property type="term" value="P:endocytosis"/>
    <property type="evidence" value="ECO:0000318"/>
    <property type="project" value="GO_Central"/>
</dbReference>
<dbReference type="GO" id="GO:0045332">
    <property type="term" value="P:phospholipid translocation"/>
    <property type="evidence" value="ECO:0000318"/>
    <property type="project" value="GO_Central"/>
</dbReference>
<dbReference type="GO" id="GO:0006890">
    <property type="term" value="P:retrograde vesicle-mediated transport, Golgi to endoplasmic reticulum"/>
    <property type="evidence" value="ECO:0000318"/>
    <property type="project" value="GO_Central"/>
</dbReference>
<dbReference type="CDD" id="cd07541">
    <property type="entry name" value="P-type_ATPase_APLT_Neo1-like"/>
    <property type="match status" value="1"/>
</dbReference>
<dbReference type="FunFam" id="3.40.1110.10:FF:000008">
    <property type="entry name" value="Phospholipid-transporting ATPase"/>
    <property type="match status" value="1"/>
</dbReference>
<dbReference type="FunFam" id="3.40.50.1000:FF:000009">
    <property type="entry name" value="Phospholipid-transporting ATPase"/>
    <property type="match status" value="1"/>
</dbReference>
<dbReference type="Gene3D" id="3.40.1110.10">
    <property type="entry name" value="Calcium-transporting ATPase, cytoplasmic domain N"/>
    <property type="match status" value="1"/>
</dbReference>
<dbReference type="Gene3D" id="2.70.150.10">
    <property type="entry name" value="Calcium-transporting ATPase, cytoplasmic transduction domain A"/>
    <property type="match status" value="1"/>
</dbReference>
<dbReference type="Gene3D" id="3.40.50.1000">
    <property type="entry name" value="HAD superfamily/HAD-like"/>
    <property type="match status" value="1"/>
</dbReference>
<dbReference type="InterPro" id="IPR023299">
    <property type="entry name" value="ATPase_P-typ_cyto_dom_N"/>
</dbReference>
<dbReference type="InterPro" id="IPR018303">
    <property type="entry name" value="ATPase_P-typ_P_site"/>
</dbReference>
<dbReference type="InterPro" id="IPR023298">
    <property type="entry name" value="ATPase_P-typ_TM_dom_sf"/>
</dbReference>
<dbReference type="InterPro" id="IPR008250">
    <property type="entry name" value="ATPase_P-typ_transduc_dom_A_sf"/>
</dbReference>
<dbReference type="InterPro" id="IPR036412">
    <property type="entry name" value="HAD-like_sf"/>
</dbReference>
<dbReference type="InterPro" id="IPR023214">
    <property type="entry name" value="HAD_sf"/>
</dbReference>
<dbReference type="InterPro" id="IPR006539">
    <property type="entry name" value="P-type_ATPase_IV"/>
</dbReference>
<dbReference type="InterPro" id="IPR032631">
    <property type="entry name" value="P-type_ATPase_N"/>
</dbReference>
<dbReference type="InterPro" id="IPR001757">
    <property type="entry name" value="P_typ_ATPase"/>
</dbReference>
<dbReference type="InterPro" id="IPR032630">
    <property type="entry name" value="P_typ_ATPase_c"/>
</dbReference>
<dbReference type="InterPro" id="IPR044492">
    <property type="entry name" value="P_typ_ATPase_HD_dom"/>
</dbReference>
<dbReference type="NCBIfam" id="TIGR01652">
    <property type="entry name" value="ATPase-Plipid"/>
    <property type="match status" value="1"/>
</dbReference>
<dbReference type="NCBIfam" id="TIGR01494">
    <property type="entry name" value="ATPase_P-type"/>
    <property type="match status" value="3"/>
</dbReference>
<dbReference type="PANTHER" id="PTHR24092:SF50">
    <property type="entry name" value="PHOSPHOLIPID-TRANSPORTING ATPASE IIB-RELATED"/>
    <property type="match status" value="1"/>
</dbReference>
<dbReference type="PANTHER" id="PTHR24092">
    <property type="entry name" value="PROBABLE PHOSPHOLIPID-TRANSPORTING ATPASE"/>
    <property type="match status" value="1"/>
</dbReference>
<dbReference type="Pfam" id="PF13246">
    <property type="entry name" value="Cation_ATPase"/>
    <property type="match status" value="1"/>
</dbReference>
<dbReference type="Pfam" id="PF00122">
    <property type="entry name" value="E1-E2_ATPase"/>
    <property type="match status" value="1"/>
</dbReference>
<dbReference type="Pfam" id="PF00702">
    <property type="entry name" value="Hydrolase"/>
    <property type="match status" value="1"/>
</dbReference>
<dbReference type="Pfam" id="PF16212">
    <property type="entry name" value="PhoLip_ATPase_C"/>
    <property type="match status" value="1"/>
</dbReference>
<dbReference type="Pfam" id="PF16209">
    <property type="entry name" value="PhoLip_ATPase_N"/>
    <property type="match status" value="1"/>
</dbReference>
<dbReference type="PRINTS" id="PR00119">
    <property type="entry name" value="CATATPASE"/>
</dbReference>
<dbReference type="SFLD" id="SFLDG00002">
    <property type="entry name" value="C1.7:_P-type_atpase_like"/>
    <property type="match status" value="1"/>
</dbReference>
<dbReference type="SFLD" id="SFLDF00027">
    <property type="entry name" value="p-type_atpase"/>
    <property type="match status" value="1"/>
</dbReference>
<dbReference type="SUPFAM" id="SSF81653">
    <property type="entry name" value="Calcium ATPase, transduction domain A"/>
    <property type="match status" value="1"/>
</dbReference>
<dbReference type="SUPFAM" id="SSF81665">
    <property type="entry name" value="Calcium ATPase, transmembrane domain M"/>
    <property type="match status" value="1"/>
</dbReference>
<dbReference type="SUPFAM" id="SSF56784">
    <property type="entry name" value="HAD-like"/>
    <property type="match status" value="1"/>
</dbReference>
<dbReference type="SUPFAM" id="SSF81660">
    <property type="entry name" value="Metal cation-transporting ATPase, ATP-binding domain N"/>
    <property type="match status" value="1"/>
</dbReference>
<dbReference type="PROSITE" id="PS00154">
    <property type="entry name" value="ATPASE_E1_E2"/>
    <property type="match status" value="1"/>
</dbReference>
<organism>
    <name type="scientific">Homo sapiens</name>
    <name type="common">Human</name>
    <dbReference type="NCBI Taxonomy" id="9606"/>
    <lineage>
        <taxon>Eukaryota</taxon>
        <taxon>Metazoa</taxon>
        <taxon>Chordata</taxon>
        <taxon>Craniata</taxon>
        <taxon>Vertebrata</taxon>
        <taxon>Euteleostomi</taxon>
        <taxon>Mammalia</taxon>
        <taxon>Eutheria</taxon>
        <taxon>Euarchontoglires</taxon>
        <taxon>Primates</taxon>
        <taxon>Haplorrhini</taxon>
        <taxon>Catarrhini</taxon>
        <taxon>Hominidae</taxon>
        <taxon>Homo</taxon>
    </lineage>
</organism>
<reference key="1">
    <citation type="journal article" date="2005" name="Nature">
        <title>DNA sequence and analysis of human chromosome 18.</title>
        <authorList>
            <person name="Nusbaum C."/>
            <person name="Zody M.C."/>
            <person name="Borowsky M.L."/>
            <person name="Kamal M."/>
            <person name="Kodira C.D."/>
            <person name="Taylor T.D."/>
            <person name="Whittaker C.A."/>
            <person name="Chang J.L."/>
            <person name="Cuomo C.A."/>
            <person name="Dewar K."/>
            <person name="FitzGerald M.G."/>
            <person name="Yang X."/>
            <person name="Abouelleil A."/>
            <person name="Allen N.R."/>
            <person name="Anderson S."/>
            <person name="Bloom T."/>
            <person name="Bugalter B."/>
            <person name="Butler J."/>
            <person name="Cook A."/>
            <person name="DeCaprio D."/>
            <person name="Engels R."/>
            <person name="Garber M."/>
            <person name="Gnirke A."/>
            <person name="Hafez N."/>
            <person name="Hall J.L."/>
            <person name="Norman C.H."/>
            <person name="Itoh T."/>
            <person name="Jaffe D.B."/>
            <person name="Kuroki Y."/>
            <person name="Lehoczky J."/>
            <person name="Lui A."/>
            <person name="Macdonald P."/>
            <person name="Mauceli E."/>
            <person name="Mikkelsen T.S."/>
            <person name="Naylor J.W."/>
            <person name="Nicol R."/>
            <person name="Nguyen C."/>
            <person name="Noguchi H."/>
            <person name="O'Leary S.B."/>
            <person name="Piqani B."/>
            <person name="Smith C.L."/>
            <person name="Talamas J.A."/>
            <person name="Topham K."/>
            <person name="Totoki Y."/>
            <person name="Toyoda A."/>
            <person name="Wain H.M."/>
            <person name="Young S.K."/>
            <person name="Zeng Q."/>
            <person name="Zimmer A.R."/>
            <person name="Fujiyama A."/>
            <person name="Hattori M."/>
            <person name="Birren B.W."/>
            <person name="Sakaki Y."/>
            <person name="Lander E.S."/>
        </authorList>
    </citation>
    <scope>NUCLEOTIDE SEQUENCE [LARGE SCALE GENOMIC DNA]</scope>
</reference>
<reference key="2">
    <citation type="journal article" date="2004" name="Genome Res.">
        <title>The status, quality, and expansion of the NIH full-length cDNA project: the Mammalian Gene Collection (MGC).</title>
        <authorList>
            <consortium name="The MGC Project Team"/>
        </authorList>
    </citation>
    <scope>NUCLEOTIDE SEQUENCE [LARGE SCALE MRNA] (ISOFORM 2)</scope>
    <scope>VARIANT GLY-39</scope>
</reference>
<reference key="3">
    <citation type="journal article" date="2004" name="Nat. Genet.">
        <title>Complete sequencing and characterization of 21,243 full-length human cDNAs.</title>
        <authorList>
            <person name="Ota T."/>
            <person name="Suzuki Y."/>
            <person name="Nishikawa T."/>
            <person name="Otsuki T."/>
            <person name="Sugiyama T."/>
            <person name="Irie R."/>
            <person name="Wakamatsu A."/>
            <person name="Hayashi K."/>
            <person name="Sato H."/>
            <person name="Nagai K."/>
            <person name="Kimura K."/>
            <person name="Makita H."/>
            <person name="Sekine M."/>
            <person name="Obayashi M."/>
            <person name="Nishi T."/>
            <person name="Shibahara T."/>
            <person name="Tanaka T."/>
            <person name="Ishii S."/>
            <person name="Yamamoto J."/>
            <person name="Saito K."/>
            <person name="Kawai Y."/>
            <person name="Isono Y."/>
            <person name="Nakamura Y."/>
            <person name="Nagahari K."/>
            <person name="Murakami K."/>
            <person name="Yasuda T."/>
            <person name="Iwayanagi T."/>
            <person name="Wagatsuma M."/>
            <person name="Shiratori A."/>
            <person name="Sudo H."/>
            <person name="Hosoiri T."/>
            <person name="Kaku Y."/>
            <person name="Kodaira H."/>
            <person name="Kondo H."/>
            <person name="Sugawara M."/>
            <person name="Takahashi M."/>
            <person name="Kanda K."/>
            <person name="Yokoi T."/>
            <person name="Furuya T."/>
            <person name="Kikkawa E."/>
            <person name="Omura Y."/>
            <person name="Abe K."/>
            <person name="Kamihara K."/>
            <person name="Katsuta N."/>
            <person name="Sato K."/>
            <person name="Tanikawa M."/>
            <person name="Yamazaki M."/>
            <person name="Ninomiya K."/>
            <person name="Ishibashi T."/>
            <person name="Yamashita H."/>
            <person name="Murakawa K."/>
            <person name="Fujimori K."/>
            <person name="Tanai H."/>
            <person name="Kimata M."/>
            <person name="Watanabe M."/>
            <person name="Hiraoka S."/>
            <person name="Chiba Y."/>
            <person name="Ishida S."/>
            <person name="Ono Y."/>
            <person name="Takiguchi S."/>
            <person name="Watanabe S."/>
            <person name="Yosida M."/>
            <person name="Hotuta T."/>
            <person name="Kusano J."/>
            <person name="Kanehori K."/>
            <person name="Takahashi-Fujii A."/>
            <person name="Hara H."/>
            <person name="Tanase T.-O."/>
            <person name="Nomura Y."/>
            <person name="Togiya S."/>
            <person name="Komai F."/>
            <person name="Hara R."/>
            <person name="Takeuchi K."/>
            <person name="Arita M."/>
            <person name="Imose N."/>
            <person name="Musashino K."/>
            <person name="Yuuki H."/>
            <person name="Oshima A."/>
            <person name="Sasaki N."/>
            <person name="Aotsuka S."/>
            <person name="Yoshikawa Y."/>
            <person name="Matsunawa H."/>
            <person name="Ichihara T."/>
            <person name="Shiohata N."/>
            <person name="Sano S."/>
            <person name="Moriya S."/>
            <person name="Momiyama H."/>
            <person name="Satoh N."/>
            <person name="Takami S."/>
            <person name="Terashima Y."/>
            <person name="Suzuki O."/>
            <person name="Nakagawa S."/>
            <person name="Senoh A."/>
            <person name="Mizoguchi H."/>
            <person name="Goto Y."/>
            <person name="Shimizu F."/>
            <person name="Wakebe H."/>
            <person name="Hishigaki H."/>
            <person name="Watanabe T."/>
            <person name="Sugiyama A."/>
            <person name="Takemoto M."/>
            <person name="Kawakami B."/>
            <person name="Yamazaki M."/>
            <person name="Watanabe K."/>
            <person name="Kumagai A."/>
            <person name="Itakura S."/>
            <person name="Fukuzumi Y."/>
            <person name="Fujimori Y."/>
            <person name="Komiyama M."/>
            <person name="Tashiro H."/>
            <person name="Tanigami A."/>
            <person name="Fujiwara T."/>
            <person name="Ono T."/>
            <person name="Yamada K."/>
            <person name="Fujii Y."/>
            <person name="Ozaki K."/>
            <person name="Hirao M."/>
            <person name="Ohmori Y."/>
            <person name="Kawabata A."/>
            <person name="Hikiji T."/>
            <person name="Kobatake N."/>
            <person name="Inagaki H."/>
            <person name="Ikema Y."/>
            <person name="Okamoto S."/>
            <person name="Okitani R."/>
            <person name="Kawakami T."/>
            <person name="Noguchi S."/>
            <person name="Itoh T."/>
            <person name="Shigeta K."/>
            <person name="Senba T."/>
            <person name="Matsumura K."/>
            <person name="Nakajima Y."/>
            <person name="Mizuno T."/>
            <person name="Morinaga M."/>
            <person name="Sasaki M."/>
            <person name="Togashi T."/>
            <person name="Oyama M."/>
            <person name="Hata H."/>
            <person name="Watanabe M."/>
            <person name="Komatsu T."/>
            <person name="Mizushima-Sugano J."/>
            <person name="Satoh T."/>
            <person name="Shirai Y."/>
            <person name="Takahashi Y."/>
            <person name="Nakagawa K."/>
            <person name="Okumura K."/>
            <person name="Nagase T."/>
            <person name="Nomura N."/>
            <person name="Kikuchi H."/>
            <person name="Masuho Y."/>
            <person name="Yamashita R."/>
            <person name="Nakai K."/>
            <person name="Yada T."/>
            <person name="Nakamura Y."/>
            <person name="Ohara O."/>
            <person name="Isogai T."/>
            <person name="Sugano S."/>
        </authorList>
    </citation>
    <scope>NUCLEOTIDE SEQUENCE [LARGE SCALE MRNA] OF 41-472 (ISOFORMS 1/2)</scope>
    <source>
        <tissue>Testis</tissue>
    </source>
</reference>
<reference key="4">
    <citation type="journal article" date="1998" name="Genome Res.">
        <title>Multiple members of a third subfamily of P-type ATPases identified by genomic sequences and ESTs.</title>
        <authorList>
            <person name="Halleck M.S."/>
            <person name="Pradhan D."/>
            <person name="Blackman C.F."/>
            <person name="Berkes C."/>
            <person name="Williamson P.L."/>
            <person name="Schlegel R.A."/>
        </authorList>
    </citation>
    <scope>NUCLEOTIDE SEQUENCE [MRNA] OF 811-1147 (ISOFORM 1)</scope>
    <source>
        <tissue>Brain</tissue>
    </source>
</reference>
<reference key="5">
    <citation type="journal article" date="2001" name="Yeast">
        <title>Characterization of 16 novel human genes showing high similarity to yeast sequences.</title>
        <authorList>
            <person name="Stanchi F."/>
            <person name="Bertocco E."/>
            <person name="Toppo S."/>
            <person name="Dioguardi R."/>
            <person name="Simionati B."/>
            <person name="Cannata N."/>
            <person name="Zimbello R."/>
            <person name="Lanfranchi G."/>
            <person name="Valle G."/>
        </authorList>
    </citation>
    <scope>NUCLEOTIDE SEQUENCE [MRNA] OF 820-1147 (ISOFORM 1)</scope>
    <source>
        <tissue>Brain</tissue>
    </source>
</reference>
<reference key="6">
    <citation type="journal article" date="2011" name="J. Biol. Chem.">
        <title>ATP9B, a P4-ATPase (a putative aminophospholipid translocase), localizes to the trans-Golgi network in a CDC50 protein-independent manner.</title>
        <authorList>
            <person name="Takatsu H."/>
            <person name="Baba K."/>
            <person name="Shima T."/>
            <person name="Umino H."/>
            <person name="Kato U."/>
            <person name="Umeda M."/>
            <person name="Nakayama K."/>
            <person name="Shin H.W."/>
        </authorList>
    </citation>
    <scope>SUBCELLULAR LOCATION</scope>
</reference>
<gene>
    <name type="primary">ATP9B</name>
    <name type="synonym">ATPIIB</name>
    <name type="synonym">NEO1L</name>
    <name type="ORF">HUSSY-20</name>
</gene>
<evidence type="ECO:0000250" key="1">
    <source>
        <dbReference type="UniProtKB" id="P04191"/>
    </source>
</evidence>
<evidence type="ECO:0000250" key="2">
    <source>
        <dbReference type="UniProtKB" id="P39524"/>
    </source>
</evidence>
<evidence type="ECO:0000250" key="3">
    <source>
        <dbReference type="UniProtKB" id="P40527"/>
    </source>
</evidence>
<evidence type="ECO:0000250" key="4">
    <source>
        <dbReference type="UniProtKB" id="Q8NB49"/>
    </source>
</evidence>
<evidence type="ECO:0000250" key="5">
    <source>
        <dbReference type="UniProtKB" id="Q9Y2Q0"/>
    </source>
</evidence>
<evidence type="ECO:0000255" key="6"/>
<evidence type="ECO:0000256" key="7">
    <source>
        <dbReference type="SAM" id="MobiDB-lite"/>
    </source>
</evidence>
<evidence type="ECO:0000269" key="8">
    <source>
    </source>
</evidence>
<evidence type="ECO:0000269" key="9">
    <source>
    </source>
</evidence>
<evidence type="ECO:0000303" key="10">
    <source>
    </source>
</evidence>
<evidence type="ECO:0000305" key="11"/>
<comment type="catalytic activity">
    <reaction>
        <text>ATP + H2O + phospholipidSide 1 = ADP + phosphate + phospholipidSide 2.</text>
        <dbReference type="EC" id="7.6.2.1"/>
    </reaction>
</comment>
<comment type="cofactor">
    <cofactor evidence="3">
        <name>Mg(2+)</name>
        <dbReference type="ChEBI" id="CHEBI:18420"/>
    </cofactor>
</comment>
<comment type="subcellular location">
    <subcellularLocation>
        <location evidence="9">Golgi apparatus</location>
        <location evidence="9">trans-Golgi network membrane</location>
        <topology evidence="9">Multi-pass membrane protein</topology>
    </subcellularLocation>
    <text>Efficient exit from the endoplasmic reticulum does not require TMEM30A, nor TMEM30B.</text>
</comment>
<comment type="alternative products">
    <event type="alternative splicing"/>
    <isoform>
        <id>O43861-1</id>
        <name>1</name>
        <sequence type="displayed"/>
    </isoform>
    <isoform>
        <id>O43861-2</id>
        <name>2</name>
        <sequence type="described" ref="VSP_035790"/>
    </isoform>
</comment>
<comment type="similarity">
    <text evidence="11">Belongs to the cation transport ATPase (P-type) (TC 3.A.3) family. Type IV subfamily.</text>
</comment>
<comment type="caution">
    <text evidence="11">It is uncertain whether Met-1 or Met-53 is the initiator.</text>
</comment>